<evidence type="ECO:0000255" key="1">
    <source>
        <dbReference type="HAMAP-Rule" id="MF_01082"/>
    </source>
</evidence>
<accession>A0KGH7</accession>
<dbReference type="EC" id="5.4.99.27" evidence="1"/>
<dbReference type="EMBL" id="CP000462">
    <property type="protein sequence ID" value="ABK38160.1"/>
    <property type="molecule type" value="Genomic_DNA"/>
</dbReference>
<dbReference type="RefSeq" id="WP_011704773.1">
    <property type="nucleotide sequence ID" value="NC_008570.1"/>
</dbReference>
<dbReference type="RefSeq" id="YP_855368.1">
    <property type="nucleotide sequence ID" value="NC_008570.1"/>
</dbReference>
<dbReference type="SMR" id="A0KGH7"/>
<dbReference type="STRING" id="380703.AHA_0825"/>
<dbReference type="EnsemblBacteria" id="ABK38160">
    <property type="protein sequence ID" value="ABK38160"/>
    <property type="gene ID" value="AHA_0825"/>
</dbReference>
<dbReference type="GeneID" id="4489305"/>
<dbReference type="KEGG" id="aha:AHA_0825"/>
<dbReference type="PATRIC" id="fig|380703.7.peg.825"/>
<dbReference type="eggNOG" id="COG0585">
    <property type="taxonomic scope" value="Bacteria"/>
</dbReference>
<dbReference type="HOGENOM" id="CLU_005281_4_0_6"/>
<dbReference type="OrthoDB" id="1550679at2"/>
<dbReference type="Proteomes" id="UP000000756">
    <property type="component" value="Chromosome"/>
</dbReference>
<dbReference type="GO" id="GO:0005829">
    <property type="term" value="C:cytosol"/>
    <property type="evidence" value="ECO:0007669"/>
    <property type="project" value="TreeGrafter"/>
</dbReference>
<dbReference type="GO" id="GO:0003723">
    <property type="term" value="F:RNA binding"/>
    <property type="evidence" value="ECO:0007669"/>
    <property type="project" value="InterPro"/>
</dbReference>
<dbReference type="GO" id="GO:0160150">
    <property type="term" value="F:tRNA pseudouridine(13) synthase activity"/>
    <property type="evidence" value="ECO:0007669"/>
    <property type="project" value="UniProtKB-EC"/>
</dbReference>
<dbReference type="GO" id="GO:0031119">
    <property type="term" value="P:tRNA pseudouridine synthesis"/>
    <property type="evidence" value="ECO:0007669"/>
    <property type="project" value="UniProtKB-UniRule"/>
</dbReference>
<dbReference type="CDD" id="cd02575">
    <property type="entry name" value="PseudoU_synth_EcTruD"/>
    <property type="match status" value="1"/>
</dbReference>
<dbReference type="Gene3D" id="3.30.2350.20">
    <property type="entry name" value="TruD, catalytic domain"/>
    <property type="match status" value="1"/>
</dbReference>
<dbReference type="Gene3D" id="3.30.2340.10">
    <property type="entry name" value="TruD, insertion domain"/>
    <property type="match status" value="1"/>
</dbReference>
<dbReference type="HAMAP" id="MF_01082">
    <property type="entry name" value="TruD"/>
    <property type="match status" value="1"/>
</dbReference>
<dbReference type="InterPro" id="IPR020103">
    <property type="entry name" value="PsdUridine_synth_cat_dom_sf"/>
</dbReference>
<dbReference type="InterPro" id="IPR001656">
    <property type="entry name" value="PsdUridine_synth_TruD"/>
</dbReference>
<dbReference type="InterPro" id="IPR020119">
    <property type="entry name" value="PsdUridine_synth_TruD_CS"/>
</dbReference>
<dbReference type="InterPro" id="IPR011760">
    <property type="entry name" value="PsdUridine_synth_TruD_insert"/>
</dbReference>
<dbReference type="InterPro" id="IPR042214">
    <property type="entry name" value="TruD_catalytic"/>
</dbReference>
<dbReference type="InterPro" id="IPR043165">
    <property type="entry name" value="TruD_insert_sf"/>
</dbReference>
<dbReference type="InterPro" id="IPR050170">
    <property type="entry name" value="TruD_pseudoU_synthase"/>
</dbReference>
<dbReference type="NCBIfam" id="TIGR00094">
    <property type="entry name" value="tRNA_TruD_broad"/>
    <property type="match status" value="1"/>
</dbReference>
<dbReference type="PANTHER" id="PTHR47811">
    <property type="entry name" value="TRNA PSEUDOURIDINE SYNTHASE D"/>
    <property type="match status" value="1"/>
</dbReference>
<dbReference type="PANTHER" id="PTHR47811:SF1">
    <property type="entry name" value="TRNA PSEUDOURIDINE SYNTHASE D"/>
    <property type="match status" value="1"/>
</dbReference>
<dbReference type="Pfam" id="PF01142">
    <property type="entry name" value="TruD"/>
    <property type="match status" value="2"/>
</dbReference>
<dbReference type="SUPFAM" id="SSF55120">
    <property type="entry name" value="Pseudouridine synthase"/>
    <property type="match status" value="1"/>
</dbReference>
<dbReference type="PROSITE" id="PS50984">
    <property type="entry name" value="TRUD"/>
    <property type="match status" value="1"/>
</dbReference>
<dbReference type="PROSITE" id="PS01268">
    <property type="entry name" value="UPF0024"/>
    <property type="match status" value="1"/>
</dbReference>
<comment type="function">
    <text evidence="1">Responsible for synthesis of pseudouridine from uracil-13 in transfer RNAs.</text>
</comment>
<comment type="catalytic activity">
    <reaction evidence="1">
        <text>uridine(13) in tRNA = pseudouridine(13) in tRNA</text>
        <dbReference type="Rhea" id="RHEA:42540"/>
        <dbReference type="Rhea" id="RHEA-COMP:10105"/>
        <dbReference type="Rhea" id="RHEA-COMP:10106"/>
        <dbReference type="ChEBI" id="CHEBI:65314"/>
        <dbReference type="ChEBI" id="CHEBI:65315"/>
        <dbReference type="EC" id="5.4.99.27"/>
    </reaction>
</comment>
<comment type="similarity">
    <text evidence="1">Belongs to the pseudouridine synthase TruD family.</text>
</comment>
<protein>
    <recommendedName>
        <fullName evidence="1">tRNA pseudouridine synthase D</fullName>
        <ecNumber evidence="1">5.4.99.27</ecNumber>
    </recommendedName>
    <alternativeName>
        <fullName evidence="1">tRNA pseudouridine(13) synthase</fullName>
    </alternativeName>
    <alternativeName>
        <fullName evidence="1">tRNA pseudouridylate synthase D</fullName>
    </alternativeName>
    <alternativeName>
        <fullName evidence="1">tRNA-uridine isomerase D</fullName>
    </alternativeName>
</protein>
<sequence length="352" mass="38455">MLEQLAYLHGAPTARGILKAQAADFVVNEDLGFEPCGEGEHIFVRVRKTGENTAWVAGLLADAAGVNRSAVTWAGLKDRHAVTEQWFGIHLPGKAEPDLSVIESDSIQILQVKRHNKKLRVGYLKGNHFILRLTGLEQADGLESRLQAIAEQGVPNYYGEQRFGRGGNNLEAAKAMFAGKRIKDRNKRSLYLSAARSMLFNAIVSARIEQGLAHQLLAGDCVMLKGSHSIFSEEGVTPELAARLASGDVQLTAPQWGRGRLASQGAAAEFEQSVLAPYHDWCDGLEKAGLDQDRRPLLLKPQAMSWQLEGTVLILSFFLPAGAFATSVVRELMQAEEADHGFRNQSDENSGQ</sequence>
<organism>
    <name type="scientific">Aeromonas hydrophila subsp. hydrophila (strain ATCC 7966 / DSM 30187 / BCRC 13018 / CCUG 14551 / JCM 1027 / KCTC 2358 / NCIMB 9240 / NCTC 8049)</name>
    <dbReference type="NCBI Taxonomy" id="380703"/>
    <lineage>
        <taxon>Bacteria</taxon>
        <taxon>Pseudomonadati</taxon>
        <taxon>Pseudomonadota</taxon>
        <taxon>Gammaproteobacteria</taxon>
        <taxon>Aeromonadales</taxon>
        <taxon>Aeromonadaceae</taxon>
        <taxon>Aeromonas</taxon>
    </lineage>
</organism>
<reference key="1">
    <citation type="journal article" date="2006" name="J. Bacteriol.">
        <title>Genome sequence of Aeromonas hydrophila ATCC 7966T: jack of all trades.</title>
        <authorList>
            <person name="Seshadri R."/>
            <person name="Joseph S.W."/>
            <person name="Chopra A.K."/>
            <person name="Sha J."/>
            <person name="Shaw J."/>
            <person name="Graf J."/>
            <person name="Haft D.H."/>
            <person name="Wu M."/>
            <person name="Ren Q."/>
            <person name="Rosovitz M.J."/>
            <person name="Madupu R."/>
            <person name="Tallon L."/>
            <person name="Kim M."/>
            <person name="Jin S."/>
            <person name="Vuong H."/>
            <person name="Stine O.C."/>
            <person name="Ali A."/>
            <person name="Horneman A.J."/>
            <person name="Heidelberg J.F."/>
        </authorList>
    </citation>
    <scope>NUCLEOTIDE SEQUENCE [LARGE SCALE GENOMIC DNA]</scope>
    <source>
        <strain>ATCC 7966 / DSM 30187 / BCRC 13018 / CCUG 14551 / JCM 1027 / KCTC 2358 / NCIMB 9240 / NCTC 8049</strain>
    </source>
</reference>
<proteinExistence type="inferred from homology"/>
<keyword id="KW-0413">Isomerase</keyword>
<keyword id="KW-1185">Reference proteome</keyword>
<keyword id="KW-0819">tRNA processing</keyword>
<feature type="chain" id="PRO_1000084728" description="tRNA pseudouridine synthase D">
    <location>
        <begin position="1"/>
        <end position="352"/>
    </location>
</feature>
<feature type="domain" description="TRUD" evidence="1">
    <location>
        <begin position="153"/>
        <end position="299"/>
    </location>
</feature>
<feature type="active site" description="Nucleophile" evidence="1">
    <location>
        <position position="78"/>
    </location>
</feature>
<name>TRUD_AERHH</name>
<gene>
    <name evidence="1" type="primary">truD</name>
    <name type="ordered locus">AHA_0825</name>
</gene>